<keyword id="KW-0903">Direct protein sequencing</keyword>
<keyword id="KW-1015">Disulfide bond</keyword>
<keyword id="KW-0449">Lipoprotein</keyword>
<keyword id="KW-0488">Methylation</keyword>
<keyword id="KW-0519">Myristate</keyword>
<evidence type="ECO:0000269" key="1">
    <source>
    </source>
</evidence>
<evidence type="ECO:0000303" key="2">
    <source>
    </source>
</evidence>
<evidence type="ECO:0000305" key="3"/>
<feature type="peptide" id="PRO_0000392633" description="Eudistomide" evidence="1">
    <location>
        <begin position="1"/>
        <end position="5"/>
    </location>
</feature>
<feature type="modified residue" description="Cysteine methyl ester" evidence="1">
    <location>
        <position position="5"/>
    </location>
</feature>
<feature type="lipid moiety-binding region" description="N-(12-oxomyristoyl)cysteine; in form Eudistomide A" evidence="1">
    <location>
        <position position="1"/>
    </location>
</feature>
<feature type="lipid moiety-binding region" description="N-[(12R)-12-hydroxymyristoyl]cysteine; in form Eudistomide B" evidence="1">
    <location>
        <position position="1"/>
    </location>
</feature>
<feature type="disulfide bond" evidence="1">
    <location>
        <begin position="1"/>
        <end position="5"/>
    </location>
</feature>
<reference evidence="3" key="1">
    <citation type="journal article" date="2009" name="J. Org. Chem.">
        <title>Isolation, structure elucidation, and synthesis of eudistomides A and B, lipopeptides from a Fijian ascidian Eudistoma sp.</title>
        <authorList>
            <person name="Whitson E.L."/>
            <person name="Ratnayake A.S."/>
            <person name="Bugni T.S."/>
            <person name="Harper M.K."/>
            <person name="Ireland C.M."/>
        </authorList>
    </citation>
    <scope>PROTEIN SEQUENCE</scope>
    <scope>MASS SPECTROMETRY</scope>
    <scope>MYRISTOYLATION AT CYS-1</scope>
    <scope>DISULFIDE BOND</scope>
    <scope>METHYLATION AT CYS-5</scope>
</reference>
<protein>
    <recommendedName>
        <fullName evidence="2">Eudistomide</fullName>
    </recommendedName>
    <alternativeName>
        <fullName evidence="2">Eudistomide A</fullName>
    </alternativeName>
    <alternativeName>
        <fullName evidence="2">Eudistomide B</fullName>
    </alternativeName>
</protein>
<sequence>CPPLC</sequence>
<comment type="PTM">
    <text evidence="1">Occurs in 2 forms which differ in the post-translational modification of Cys-1. In form Eudistomide A cysteine is modified to N-(12-oxomyristoyl)cysteine while in form Eudistomide B cysteine is modified to N-[(12R)-12-hydroxymyristoyl]cysteine (PubMed:19053188).</text>
</comment>
<comment type="mass spectrometry">
    <text>The measured mass is that of Eudistomide A.</text>
</comment>
<comment type="mass spectrometry">
    <text>The measured mass is that of Eudistomide B.</text>
</comment>
<accession>P86455</accession>
<proteinExistence type="evidence at protein level"/>
<dbReference type="iPTMnet" id="P86455"/>
<organism>
    <name type="scientific">Eudistoma sp. (strain FJ04-12-071)</name>
    <dbReference type="NCBI Taxonomy" id="715217"/>
    <lineage>
        <taxon>Eukaryota</taxon>
        <taxon>Metazoa</taxon>
        <taxon>Chordata</taxon>
        <taxon>Tunicata</taxon>
        <taxon>Ascidiacea</taxon>
        <taxon>Aplousobranchia</taxon>
        <taxon>Polycitoridae</taxon>
        <taxon>Eudistoma</taxon>
    </lineage>
</organism>
<name>EUDIS_EUDSF</name>